<dbReference type="EMBL" id="CP000083">
    <property type="protein sequence ID" value="AAZ25061.1"/>
    <property type="molecule type" value="Genomic_DNA"/>
</dbReference>
<dbReference type="RefSeq" id="WP_011041721.1">
    <property type="nucleotide sequence ID" value="NC_003910.7"/>
</dbReference>
<dbReference type="SMR" id="Q487Z4"/>
<dbReference type="STRING" id="167879.CPS_0872"/>
<dbReference type="KEGG" id="cps:CPS_0872"/>
<dbReference type="eggNOG" id="COG0088">
    <property type="taxonomic scope" value="Bacteria"/>
</dbReference>
<dbReference type="HOGENOM" id="CLU_041575_5_2_6"/>
<dbReference type="Proteomes" id="UP000000547">
    <property type="component" value="Chromosome"/>
</dbReference>
<dbReference type="GO" id="GO:1990904">
    <property type="term" value="C:ribonucleoprotein complex"/>
    <property type="evidence" value="ECO:0007669"/>
    <property type="project" value="UniProtKB-KW"/>
</dbReference>
<dbReference type="GO" id="GO:0005840">
    <property type="term" value="C:ribosome"/>
    <property type="evidence" value="ECO:0007669"/>
    <property type="project" value="UniProtKB-KW"/>
</dbReference>
<dbReference type="GO" id="GO:0019843">
    <property type="term" value="F:rRNA binding"/>
    <property type="evidence" value="ECO:0007669"/>
    <property type="project" value="UniProtKB-UniRule"/>
</dbReference>
<dbReference type="GO" id="GO:0003735">
    <property type="term" value="F:structural constituent of ribosome"/>
    <property type="evidence" value="ECO:0007669"/>
    <property type="project" value="InterPro"/>
</dbReference>
<dbReference type="GO" id="GO:0006412">
    <property type="term" value="P:translation"/>
    <property type="evidence" value="ECO:0007669"/>
    <property type="project" value="UniProtKB-UniRule"/>
</dbReference>
<dbReference type="FunFam" id="3.40.1370.10:FF:000001">
    <property type="entry name" value="50S ribosomal protein L4"/>
    <property type="match status" value="1"/>
</dbReference>
<dbReference type="Gene3D" id="3.40.1370.10">
    <property type="match status" value="1"/>
</dbReference>
<dbReference type="HAMAP" id="MF_01328_B">
    <property type="entry name" value="Ribosomal_uL4_B"/>
    <property type="match status" value="1"/>
</dbReference>
<dbReference type="InterPro" id="IPR002136">
    <property type="entry name" value="Ribosomal_uL4"/>
</dbReference>
<dbReference type="InterPro" id="IPR013005">
    <property type="entry name" value="Ribosomal_uL4-like"/>
</dbReference>
<dbReference type="InterPro" id="IPR023574">
    <property type="entry name" value="Ribosomal_uL4_dom_sf"/>
</dbReference>
<dbReference type="NCBIfam" id="TIGR03953">
    <property type="entry name" value="rplD_bact"/>
    <property type="match status" value="1"/>
</dbReference>
<dbReference type="PANTHER" id="PTHR10746">
    <property type="entry name" value="50S RIBOSOMAL PROTEIN L4"/>
    <property type="match status" value="1"/>
</dbReference>
<dbReference type="PANTHER" id="PTHR10746:SF6">
    <property type="entry name" value="LARGE RIBOSOMAL SUBUNIT PROTEIN UL4M"/>
    <property type="match status" value="1"/>
</dbReference>
<dbReference type="Pfam" id="PF00573">
    <property type="entry name" value="Ribosomal_L4"/>
    <property type="match status" value="1"/>
</dbReference>
<dbReference type="SUPFAM" id="SSF52166">
    <property type="entry name" value="Ribosomal protein L4"/>
    <property type="match status" value="1"/>
</dbReference>
<name>RL4_COLP3</name>
<evidence type="ECO:0000255" key="1">
    <source>
        <dbReference type="HAMAP-Rule" id="MF_01328"/>
    </source>
</evidence>
<evidence type="ECO:0000256" key="2">
    <source>
        <dbReference type="SAM" id="MobiDB-lite"/>
    </source>
</evidence>
<evidence type="ECO:0000305" key="3"/>
<protein>
    <recommendedName>
        <fullName evidence="1">Large ribosomal subunit protein uL4</fullName>
    </recommendedName>
    <alternativeName>
        <fullName evidence="3">50S ribosomal protein L4</fullName>
    </alternativeName>
</protein>
<keyword id="KW-0687">Ribonucleoprotein</keyword>
<keyword id="KW-0689">Ribosomal protein</keyword>
<keyword id="KW-0694">RNA-binding</keyword>
<keyword id="KW-0699">rRNA-binding</keyword>
<gene>
    <name evidence="1" type="primary">rplD</name>
    <name type="ordered locus">CPS_0872</name>
</gene>
<sequence>MELSLKDASGALEVSEATFGREFNEALVHQVVVAYAAGARQGTRAQKTRSEVSGGGAKPWRQKGTGRARAGTTRGPIWRTGGVTFAAKPQDHSQKVNRKMYRGAIASILSELVRQERLVVVENFSVETPKTKELVAKLKGLELKDVLIVTKEVDENLFLSARNLYKVDVRDVAAIDPVSLVGFEKVLITADAVKEIEGILA</sequence>
<proteinExistence type="inferred from homology"/>
<organism>
    <name type="scientific">Colwellia psychrerythraea (strain 34H / ATCC BAA-681)</name>
    <name type="common">Vibrio psychroerythus</name>
    <dbReference type="NCBI Taxonomy" id="167879"/>
    <lineage>
        <taxon>Bacteria</taxon>
        <taxon>Pseudomonadati</taxon>
        <taxon>Pseudomonadota</taxon>
        <taxon>Gammaproteobacteria</taxon>
        <taxon>Alteromonadales</taxon>
        <taxon>Colwelliaceae</taxon>
        <taxon>Colwellia</taxon>
    </lineage>
</organism>
<feature type="chain" id="PRO_0000242362" description="Large ribosomal subunit protein uL4">
    <location>
        <begin position="1"/>
        <end position="201"/>
    </location>
</feature>
<feature type="region of interest" description="Disordered" evidence="2">
    <location>
        <begin position="43"/>
        <end position="73"/>
    </location>
</feature>
<accession>Q487Z4</accession>
<comment type="function">
    <text evidence="1">One of the primary rRNA binding proteins, this protein initially binds near the 5'-end of the 23S rRNA. It is important during the early stages of 50S assembly. It makes multiple contacts with different domains of the 23S rRNA in the assembled 50S subunit and ribosome.</text>
</comment>
<comment type="function">
    <text evidence="1">Forms part of the polypeptide exit tunnel.</text>
</comment>
<comment type="subunit">
    <text evidence="1">Part of the 50S ribosomal subunit.</text>
</comment>
<comment type="similarity">
    <text evidence="1">Belongs to the universal ribosomal protein uL4 family.</text>
</comment>
<reference key="1">
    <citation type="journal article" date="2005" name="Proc. Natl. Acad. Sci. U.S.A.">
        <title>The psychrophilic lifestyle as revealed by the genome sequence of Colwellia psychrerythraea 34H through genomic and proteomic analyses.</title>
        <authorList>
            <person name="Methe B.A."/>
            <person name="Nelson K.E."/>
            <person name="Deming J.W."/>
            <person name="Momen B."/>
            <person name="Melamud E."/>
            <person name="Zhang X."/>
            <person name="Moult J."/>
            <person name="Madupu R."/>
            <person name="Nelson W.C."/>
            <person name="Dodson R.J."/>
            <person name="Brinkac L.M."/>
            <person name="Daugherty S.C."/>
            <person name="Durkin A.S."/>
            <person name="DeBoy R.T."/>
            <person name="Kolonay J.F."/>
            <person name="Sullivan S.A."/>
            <person name="Zhou L."/>
            <person name="Davidsen T.M."/>
            <person name="Wu M."/>
            <person name="Huston A.L."/>
            <person name="Lewis M."/>
            <person name="Weaver B."/>
            <person name="Weidman J.F."/>
            <person name="Khouri H."/>
            <person name="Utterback T.R."/>
            <person name="Feldblyum T.V."/>
            <person name="Fraser C.M."/>
        </authorList>
    </citation>
    <scope>NUCLEOTIDE SEQUENCE [LARGE SCALE GENOMIC DNA]</scope>
    <source>
        <strain>34H / ATCC BAA-681</strain>
    </source>
</reference>